<keyword id="KW-1185">Reference proteome</keyword>
<keyword id="KW-0711">Selenium</keyword>
<keyword id="KW-0808">Transferase</keyword>
<accession>Q83SD5</accession>
<accession>Q7C2V5</accession>
<feature type="chain" id="PRO_0000210877" description="tRNA 2-selenouridine synthase">
    <location>
        <begin position="1"/>
        <end position="364"/>
    </location>
</feature>
<feature type="domain" description="Rhodanese" evidence="1">
    <location>
        <begin position="14"/>
        <end position="137"/>
    </location>
</feature>
<feature type="active site" description="S-selanylcysteine intermediate" evidence="1">
    <location>
        <position position="97"/>
    </location>
</feature>
<proteinExistence type="inferred from homology"/>
<comment type="function">
    <text evidence="1">Involved in the post-transcriptional modification of the uridine at the wobble position (U34) of tRNA(Lys), tRNA(Glu) and tRNA(Gln). Catalyzes the conversion of 2-thiouridine (S2U-RNA) to 2-selenouridine (Se2U-RNA). Acts in a two-step process involving geranylation of 2-thiouridine (S2U) to S-geranyl-2-thiouridine (geS2U) and subsequent selenation of the latter derivative to 2-selenouridine (Se2U) in the tRNA chain.</text>
</comment>
<comment type="catalytic activity">
    <reaction evidence="1">
        <text>5-methylaminomethyl-2-thiouridine(34) in tRNA + selenophosphate + (2E)-geranyl diphosphate + H2O + H(+) = 5-methylaminomethyl-2-selenouridine(34) in tRNA + (2E)-thiogeraniol + phosphate + diphosphate</text>
        <dbReference type="Rhea" id="RHEA:42716"/>
        <dbReference type="Rhea" id="RHEA-COMP:10195"/>
        <dbReference type="Rhea" id="RHEA-COMP:10196"/>
        <dbReference type="ChEBI" id="CHEBI:15377"/>
        <dbReference type="ChEBI" id="CHEBI:15378"/>
        <dbReference type="ChEBI" id="CHEBI:16144"/>
        <dbReference type="ChEBI" id="CHEBI:33019"/>
        <dbReference type="ChEBI" id="CHEBI:43474"/>
        <dbReference type="ChEBI" id="CHEBI:58057"/>
        <dbReference type="ChEBI" id="CHEBI:74455"/>
        <dbReference type="ChEBI" id="CHEBI:82743"/>
        <dbReference type="ChEBI" id="CHEBI:143703"/>
        <dbReference type="EC" id="2.9.1.3"/>
    </reaction>
    <physiologicalReaction direction="left-to-right" evidence="1">
        <dbReference type="Rhea" id="RHEA:42717"/>
    </physiologicalReaction>
</comment>
<comment type="catalytic activity">
    <reaction evidence="1">
        <text>5-methylaminomethyl-2-thiouridine(34) in tRNA + (2E)-geranyl diphosphate = 5-methylaminomethyl-S-(2E)-geranyl-thiouridine(34) in tRNA + diphosphate</text>
        <dbReference type="Rhea" id="RHEA:14085"/>
        <dbReference type="Rhea" id="RHEA-COMP:10195"/>
        <dbReference type="Rhea" id="RHEA-COMP:14654"/>
        <dbReference type="ChEBI" id="CHEBI:33019"/>
        <dbReference type="ChEBI" id="CHEBI:58057"/>
        <dbReference type="ChEBI" id="CHEBI:74455"/>
        <dbReference type="ChEBI" id="CHEBI:140632"/>
    </reaction>
    <physiologicalReaction direction="left-to-right" evidence="1">
        <dbReference type="Rhea" id="RHEA:14086"/>
    </physiologicalReaction>
</comment>
<comment type="catalytic activity">
    <reaction evidence="1">
        <text>5-methylaminomethyl-S-(2E)-geranyl-thiouridine(34) in tRNA + selenophosphate + H(+) = 5-methylaminomethyl-2-(Se-phospho)selenouridine(34) in tRNA + (2E)-thiogeraniol</text>
        <dbReference type="Rhea" id="RHEA:60172"/>
        <dbReference type="Rhea" id="RHEA-COMP:14654"/>
        <dbReference type="Rhea" id="RHEA-COMP:15523"/>
        <dbReference type="ChEBI" id="CHEBI:15378"/>
        <dbReference type="ChEBI" id="CHEBI:16144"/>
        <dbReference type="ChEBI" id="CHEBI:140632"/>
        <dbReference type="ChEBI" id="CHEBI:143702"/>
        <dbReference type="ChEBI" id="CHEBI:143703"/>
    </reaction>
    <physiologicalReaction direction="left-to-right" evidence="1">
        <dbReference type="Rhea" id="RHEA:60173"/>
    </physiologicalReaction>
</comment>
<comment type="catalytic activity">
    <reaction evidence="1">
        <text>5-methylaminomethyl-2-(Se-phospho)selenouridine(34) in tRNA + H2O = 5-methylaminomethyl-2-selenouridine(34) in tRNA + phosphate</text>
        <dbReference type="Rhea" id="RHEA:60176"/>
        <dbReference type="Rhea" id="RHEA-COMP:10196"/>
        <dbReference type="Rhea" id="RHEA-COMP:15523"/>
        <dbReference type="ChEBI" id="CHEBI:15377"/>
        <dbReference type="ChEBI" id="CHEBI:43474"/>
        <dbReference type="ChEBI" id="CHEBI:82743"/>
        <dbReference type="ChEBI" id="CHEBI:143702"/>
    </reaction>
    <physiologicalReaction direction="left-to-right" evidence="1">
        <dbReference type="Rhea" id="RHEA:60177"/>
    </physiologicalReaction>
</comment>
<comment type="subunit">
    <text evidence="1">Monomer.</text>
</comment>
<comment type="similarity">
    <text evidence="1">Belongs to the SelU family.</text>
</comment>
<sequence>MQERHTEQDYRALLIADTPIIDVRAPIEFEQGAMPAAINLPLMDNDERASVGTCYKQQGSDAALALGHKLVAGEIRQQRMYAWRAACLQNPQGILCCARGGQRSHIVQRWLHEAGIDYPLVEGGYKALRQTAIQATIELAQKPIVLIGGCTGSGKTLLVQQQPNGVDLEGLARHRGSAFGRTLQPQLSQASFENLLAAEMLKTDARQDLRLWVLEDESRMIGSNHLPECLRERMTQAAIAVVEDPFEIRLERLNEEYFLRMHHDFTHAYGDEQGWQEYCEYLHHGLSAIKRRLGLQRYNELAAQLDTALTTQLTTGSTDGHLAWLVPLLKEYYDPMYRYQLEKKAEKVVFRGEWAEVAVWVKAQ</sequence>
<organism>
    <name type="scientific">Shigella flexneri</name>
    <dbReference type="NCBI Taxonomy" id="623"/>
    <lineage>
        <taxon>Bacteria</taxon>
        <taxon>Pseudomonadati</taxon>
        <taxon>Pseudomonadota</taxon>
        <taxon>Gammaproteobacteria</taxon>
        <taxon>Enterobacterales</taxon>
        <taxon>Enterobacteriaceae</taxon>
        <taxon>Shigella</taxon>
    </lineage>
</organism>
<protein>
    <recommendedName>
        <fullName evidence="1">tRNA 2-selenouridine synthase</fullName>
        <ecNumber evidence="1">2.9.1.3</ecNumber>
    </recommendedName>
</protein>
<gene>
    <name evidence="1" type="primary">selU</name>
    <name type="ordered locus">SF0442</name>
    <name type="ordered locus">S0449</name>
</gene>
<dbReference type="EC" id="2.9.1.3" evidence="1"/>
<dbReference type="EMBL" id="AE005674">
    <property type="protein sequence ID" value="AAN42096.1"/>
    <property type="molecule type" value="Genomic_DNA"/>
</dbReference>
<dbReference type="EMBL" id="AE014073">
    <property type="protein sequence ID" value="AAP15972.1"/>
    <property type="molecule type" value="Genomic_DNA"/>
</dbReference>
<dbReference type="SMR" id="Q83SD5"/>
<dbReference type="STRING" id="198214.SF0442"/>
<dbReference type="PaxDb" id="198214-SF0442"/>
<dbReference type="KEGG" id="sfl:SF0442"/>
<dbReference type="KEGG" id="sfx:S0449"/>
<dbReference type="PATRIC" id="fig|198214.7.peg.507"/>
<dbReference type="HOGENOM" id="CLU_043456_1_0_6"/>
<dbReference type="Proteomes" id="UP000001006">
    <property type="component" value="Chromosome"/>
</dbReference>
<dbReference type="Proteomes" id="UP000002673">
    <property type="component" value="Chromosome"/>
</dbReference>
<dbReference type="GO" id="GO:0016765">
    <property type="term" value="F:transferase activity, transferring alkyl or aryl (other than methyl) groups"/>
    <property type="evidence" value="ECO:0007669"/>
    <property type="project" value="UniProtKB-UniRule"/>
</dbReference>
<dbReference type="GO" id="GO:0043828">
    <property type="term" value="F:tRNA 2-selenouridine synthase activity"/>
    <property type="evidence" value="ECO:0007669"/>
    <property type="project" value="UniProtKB-EC"/>
</dbReference>
<dbReference type="GO" id="GO:0002098">
    <property type="term" value="P:tRNA wobble uridine modification"/>
    <property type="evidence" value="ECO:0007669"/>
    <property type="project" value="UniProtKB-UniRule"/>
</dbReference>
<dbReference type="CDD" id="cd01520">
    <property type="entry name" value="RHOD_YbbB"/>
    <property type="match status" value="1"/>
</dbReference>
<dbReference type="FunFam" id="3.40.250.10:FF:000009">
    <property type="entry name" value="tRNA 2-selenouridine/geranyl-2-thiouridine synthase"/>
    <property type="match status" value="1"/>
</dbReference>
<dbReference type="Gene3D" id="3.40.250.10">
    <property type="entry name" value="Rhodanese-like domain"/>
    <property type="match status" value="1"/>
</dbReference>
<dbReference type="HAMAP" id="MF_01622">
    <property type="entry name" value="tRNA_sel_U_synth"/>
    <property type="match status" value="1"/>
</dbReference>
<dbReference type="InterPro" id="IPR001763">
    <property type="entry name" value="Rhodanese-like_dom"/>
</dbReference>
<dbReference type="InterPro" id="IPR036873">
    <property type="entry name" value="Rhodanese-like_dom_sf"/>
</dbReference>
<dbReference type="InterPro" id="IPR017582">
    <property type="entry name" value="SelU"/>
</dbReference>
<dbReference type="NCBIfam" id="NF008749">
    <property type="entry name" value="PRK11784.1-1"/>
    <property type="match status" value="1"/>
</dbReference>
<dbReference type="NCBIfam" id="NF008751">
    <property type="entry name" value="PRK11784.1-3"/>
    <property type="match status" value="1"/>
</dbReference>
<dbReference type="NCBIfam" id="TIGR03167">
    <property type="entry name" value="tRNA_sel_U_synt"/>
    <property type="match status" value="1"/>
</dbReference>
<dbReference type="PANTHER" id="PTHR30401">
    <property type="entry name" value="TRNA 2-SELENOURIDINE SYNTHASE"/>
    <property type="match status" value="1"/>
</dbReference>
<dbReference type="PANTHER" id="PTHR30401:SF0">
    <property type="entry name" value="TRNA 2-SELENOURIDINE SYNTHASE"/>
    <property type="match status" value="1"/>
</dbReference>
<dbReference type="Pfam" id="PF00581">
    <property type="entry name" value="Rhodanese"/>
    <property type="match status" value="1"/>
</dbReference>
<dbReference type="SMART" id="SM00450">
    <property type="entry name" value="RHOD"/>
    <property type="match status" value="1"/>
</dbReference>
<dbReference type="SUPFAM" id="SSF52821">
    <property type="entry name" value="Rhodanese/Cell cycle control phosphatase"/>
    <property type="match status" value="1"/>
</dbReference>
<dbReference type="PROSITE" id="PS50206">
    <property type="entry name" value="RHODANESE_3"/>
    <property type="match status" value="1"/>
</dbReference>
<reference key="1">
    <citation type="journal article" date="2002" name="Nucleic Acids Res.">
        <title>Genome sequence of Shigella flexneri 2a: insights into pathogenicity through comparison with genomes of Escherichia coli K12 and O157.</title>
        <authorList>
            <person name="Jin Q."/>
            <person name="Yuan Z."/>
            <person name="Xu J."/>
            <person name="Wang Y."/>
            <person name="Shen Y."/>
            <person name="Lu W."/>
            <person name="Wang J."/>
            <person name="Liu H."/>
            <person name="Yang J."/>
            <person name="Yang F."/>
            <person name="Zhang X."/>
            <person name="Zhang J."/>
            <person name="Yang G."/>
            <person name="Wu H."/>
            <person name="Qu D."/>
            <person name="Dong J."/>
            <person name="Sun L."/>
            <person name="Xue Y."/>
            <person name="Zhao A."/>
            <person name="Gao Y."/>
            <person name="Zhu J."/>
            <person name="Kan B."/>
            <person name="Ding K."/>
            <person name="Chen S."/>
            <person name="Cheng H."/>
            <person name="Yao Z."/>
            <person name="He B."/>
            <person name="Chen R."/>
            <person name="Ma D."/>
            <person name="Qiang B."/>
            <person name="Wen Y."/>
            <person name="Hou Y."/>
            <person name="Yu J."/>
        </authorList>
    </citation>
    <scope>NUCLEOTIDE SEQUENCE [LARGE SCALE GENOMIC DNA]</scope>
    <source>
        <strain>301 / Serotype 2a</strain>
    </source>
</reference>
<reference key="2">
    <citation type="journal article" date="2003" name="Infect. Immun.">
        <title>Complete genome sequence and comparative genomics of Shigella flexneri serotype 2a strain 2457T.</title>
        <authorList>
            <person name="Wei J."/>
            <person name="Goldberg M.B."/>
            <person name="Burland V."/>
            <person name="Venkatesan M.M."/>
            <person name="Deng W."/>
            <person name="Fournier G."/>
            <person name="Mayhew G.F."/>
            <person name="Plunkett G. III"/>
            <person name="Rose D.J."/>
            <person name="Darling A."/>
            <person name="Mau B."/>
            <person name="Perna N.T."/>
            <person name="Payne S.M."/>
            <person name="Runyen-Janecky L.J."/>
            <person name="Zhou S."/>
            <person name="Schwartz D.C."/>
            <person name="Blattner F.R."/>
        </authorList>
    </citation>
    <scope>NUCLEOTIDE SEQUENCE [LARGE SCALE GENOMIC DNA]</scope>
    <source>
        <strain>ATCC 700930 / 2457T / Serotype 2a</strain>
    </source>
</reference>
<evidence type="ECO:0000255" key="1">
    <source>
        <dbReference type="HAMAP-Rule" id="MF_01622"/>
    </source>
</evidence>
<name>SELU_SHIFL</name>